<feature type="chain" id="PRO_0000049168" description="Homeobox protein lin-39">
    <location>
        <begin position="1"/>
        <end position="253"/>
    </location>
</feature>
<feature type="DNA-binding region" description="Homeobox" evidence="1">
    <location>
        <begin position="165"/>
        <end position="224"/>
    </location>
</feature>
<feature type="region of interest" description="Disordered" evidence="2">
    <location>
        <begin position="1"/>
        <end position="53"/>
    </location>
</feature>
<feature type="region of interest" description="Disordered" evidence="2">
    <location>
        <begin position="115"/>
        <end position="148"/>
    </location>
</feature>
<feature type="short sequence motif" description="Antp-type hexapeptide">
    <location>
        <begin position="148"/>
        <end position="153"/>
    </location>
</feature>
<feature type="compositionally biased region" description="Low complexity" evidence="2">
    <location>
        <begin position="1"/>
        <end position="46"/>
    </location>
</feature>
<organism>
    <name type="scientific">Caenorhabditis elegans</name>
    <dbReference type="NCBI Taxonomy" id="6239"/>
    <lineage>
        <taxon>Eukaryota</taxon>
        <taxon>Metazoa</taxon>
        <taxon>Ecdysozoa</taxon>
        <taxon>Nematoda</taxon>
        <taxon>Chromadorea</taxon>
        <taxon>Rhabditida</taxon>
        <taxon>Rhabditina</taxon>
        <taxon>Rhabditomorpha</taxon>
        <taxon>Rhabditoidea</taxon>
        <taxon>Rhabditidae</taxon>
        <taxon>Peloderinae</taxon>
        <taxon>Caenorhabditis</taxon>
    </lineage>
</organism>
<protein>
    <recommendedName>
        <fullName>Homeobox protein lin-39</fullName>
    </recommendedName>
    <alternativeName>
        <fullName>Abnormal cell lineage protein 39</fullName>
    </alternativeName>
</protein>
<sequence>MTTSTSPSSTDAPRATAPESSSSSSSSSSSSSSTSSVGASGIPSSSELSSTIGYDPMTASAALSAHFGSYYDPTSSSQIASYFASSQGLGGPQYPILGDQSLCYNPSVTSTHHDWKHLEGDDDDDKDDDKKGISGDDDDMDKNSGGAVYPWMTRVHSTTGGSRGEKRQRTAYTRNQVLELEKEFHTHKYLTRKRRIEVAHSLMLTERQVKIWFQNRRMKHKKENKDKPMTPPMMPFGANLPFGPFRFPLFNQF</sequence>
<name>LIN39_CAEEL</name>
<proteinExistence type="evidence at protein level"/>
<comment type="function">
    <text evidence="4 5 6 7">Transcription factor (PubMed:12399309, PubMed:21307099, PubMed:23784779). Binds to the consensus 5'-TGATNNAT(G/T)(G/A)-3' PBC/Hox motif of target genes to regulate gene expression; sem-2 in order to promote cell fate specification in the postembryonic mesoderm (also known as the M lineage), and egl-18 and elt-6 to regulate vulval development (PubMed:12399309, PubMed:21307099, PubMed:23784779). May bind to the PBC/Hox motif as a heterodimer with homeobox protein ceh-20 (PubMed:12399309). Regulates vulval precursor cell (VPC) differentiation, in concert with orphan nuclear receptor nhr-25 (PubMed:15314147). Regulates the expression of mig-13, which controls the asymmetric distribution of actin cytoskeleton-binding protein cor-1 in Q neuroblasts (PubMed:23784779). This in turn controls the polarity of migration of Q neuroblasts and the subsequent mid-body region-specific development (PubMed:23784779, PubMed:8101475).</text>
</comment>
<comment type="subunit">
    <text evidence="4">Interacts with nhr-25.</text>
</comment>
<comment type="subcellular location">
    <subcellularLocation>
        <location evidence="8">Nucleus</location>
    </subcellularLocation>
</comment>
<comment type="developmental stage">
    <text evidence="6">Expressed in Q neuroblasts during larval development with higher expression in migrating QR.ap neuroblast descendents than in QL.ap neuroblast descendents.</text>
</comment>
<comment type="disruption phenotype">
    <text evidence="3 5">Lin-39 and mab-5 double mutants have reduced sex myoblast specification-specific expression of sem-2 in the developing mesoderm (PubMed:21307099). RNAi-mediated knockdown in L1-stage larvae significantly reduces the fraction of unfused P5.p-P7.p cells that express egl-18 and elt-6 (PubMed:12399309).</text>
</comment>
<comment type="similarity">
    <text evidence="8">Belongs to the Antp homeobox family. Deformed subfamily.</text>
</comment>
<gene>
    <name evidence="9" type="primary">lin-39</name>
    <name evidence="9" type="synonym">ceh-15</name>
    <name evidence="9" type="ORF">C07H6.7</name>
</gene>
<accession>P34684</accession>
<evidence type="ECO:0000255" key="1">
    <source>
        <dbReference type="PROSITE-ProRule" id="PRU00108"/>
    </source>
</evidence>
<evidence type="ECO:0000256" key="2">
    <source>
        <dbReference type="SAM" id="MobiDB-lite"/>
    </source>
</evidence>
<evidence type="ECO:0000269" key="3">
    <source>
    </source>
</evidence>
<evidence type="ECO:0000269" key="4">
    <source>
    </source>
</evidence>
<evidence type="ECO:0000269" key="5">
    <source>
    </source>
</evidence>
<evidence type="ECO:0000269" key="6">
    <source>
    </source>
</evidence>
<evidence type="ECO:0000269" key="7">
    <source>
    </source>
</evidence>
<evidence type="ECO:0000305" key="8"/>
<evidence type="ECO:0000312" key="9">
    <source>
        <dbReference type="WormBase" id="C07H6.7"/>
    </source>
</evidence>
<dbReference type="EMBL" id="L19639">
    <property type="protein sequence ID" value="AAC37168.1"/>
    <property type="molecule type" value="mRNA"/>
</dbReference>
<dbReference type="EMBL" id="L19248">
    <property type="protein sequence ID" value="AAB04137.1"/>
    <property type="molecule type" value="mRNA"/>
</dbReference>
<dbReference type="EMBL" id="FO080423">
    <property type="protein sequence ID" value="CCD63594.1"/>
    <property type="molecule type" value="Genomic_DNA"/>
</dbReference>
<dbReference type="PIR" id="B40722">
    <property type="entry name" value="B40722"/>
</dbReference>
<dbReference type="RefSeq" id="NP_001021164.1">
    <property type="nucleotide sequence ID" value="NM_001025993.5"/>
</dbReference>
<dbReference type="SMR" id="P34684"/>
<dbReference type="BioGRID" id="41276">
    <property type="interactions" value="26"/>
</dbReference>
<dbReference type="FunCoup" id="P34684">
    <property type="interactions" value="146"/>
</dbReference>
<dbReference type="IntAct" id="P34684">
    <property type="interactions" value="23"/>
</dbReference>
<dbReference type="MINT" id="P34684"/>
<dbReference type="STRING" id="6239.C07H6.7.2"/>
<dbReference type="PaxDb" id="6239-C07H6.7.1"/>
<dbReference type="EnsemblMetazoa" id="C07H6.7.1">
    <property type="protein sequence ID" value="C07H6.7.1"/>
    <property type="gene ID" value="WBGene00003024"/>
</dbReference>
<dbReference type="EnsemblMetazoa" id="C07H6.7.2">
    <property type="protein sequence ID" value="C07H6.7.2"/>
    <property type="gene ID" value="WBGene00003024"/>
</dbReference>
<dbReference type="GeneID" id="176068"/>
<dbReference type="KEGG" id="cel:CELE_C07H6.7"/>
<dbReference type="UCSC" id="C07H6.7.2">
    <property type="organism name" value="c. elegans"/>
</dbReference>
<dbReference type="AGR" id="WB:WBGene00003024"/>
<dbReference type="CTD" id="176068"/>
<dbReference type="WormBase" id="C07H6.7">
    <property type="protein sequence ID" value="CE03975"/>
    <property type="gene ID" value="WBGene00003024"/>
    <property type="gene designation" value="lin-39"/>
</dbReference>
<dbReference type="eggNOG" id="KOG0489">
    <property type="taxonomic scope" value="Eukaryota"/>
</dbReference>
<dbReference type="GeneTree" id="ENSGT00940000169766"/>
<dbReference type="HOGENOM" id="CLU_1086806_0_0_1"/>
<dbReference type="InParanoid" id="P34684"/>
<dbReference type="OMA" id="EFHTHKY"/>
<dbReference type="OrthoDB" id="6159439at2759"/>
<dbReference type="SignaLink" id="P34684"/>
<dbReference type="PRO" id="PR:P34684"/>
<dbReference type="Proteomes" id="UP000001940">
    <property type="component" value="Chromosome III"/>
</dbReference>
<dbReference type="Bgee" id="WBGene00003024">
    <property type="expression patterns" value="Expressed in embryo and 3 other cell types or tissues"/>
</dbReference>
<dbReference type="GO" id="GO:0005654">
    <property type="term" value="C:nucleoplasm"/>
    <property type="evidence" value="ECO:0000318"/>
    <property type="project" value="GO_Central"/>
</dbReference>
<dbReference type="GO" id="GO:0005634">
    <property type="term" value="C:nucleus"/>
    <property type="evidence" value="ECO:0000314"/>
    <property type="project" value="WormBase"/>
</dbReference>
<dbReference type="GO" id="GO:0000987">
    <property type="term" value="F:cis-regulatory region sequence-specific DNA binding"/>
    <property type="evidence" value="ECO:0000314"/>
    <property type="project" value="UniProtKB"/>
</dbReference>
<dbReference type="GO" id="GO:0000981">
    <property type="term" value="F:DNA-binding transcription factor activity, RNA polymerase II-specific"/>
    <property type="evidence" value="ECO:0000318"/>
    <property type="project" value="GO_Central"/>
</dbReference>
<dbReference type="GO" id="GO:0000978">
    <property type="term" value="F:RNA polymerase II cis-regulatory region sequence-specific DNA binding"/>
    <property type="evidence" value="ECO:0000318"/>
    <property type="project" value="GO_Central"/>
</dbReference>
<dbReference type="GO" id="GO:0043565">
    <property type="term" value="F:sequence-specific DNA binding"/>
    <property type="evidence" value="ECO:0000314"/>
    <property type="project" value="WormBase"/>
</dbReference>
<dbReference type="GO" id="GO:0009952">
    <property type="term" value="P:anterior/posterior pattern specification"/>
    <property type="evidence" value="ECO:0000315"/>
    <property type="project" value="UniProtKB"/>
</dbReference>
<dbReference type="GO" id="GO:0045893">
    <property type="term" value="P:positive regulation of DNA-templated transcription"/>
    <property type="evidence" value="ECO:0000314"/>
    <property type="project" value="UniProtKB"/>
</dbReference>
<dbReference type="GO" id="GO:0048337">
    <property type="term" value="P:positive regulation of mesodermal cell fate specification"/>
    <property type="evidence" value="ECO:0000316"/>
    <property type="project" value="UniProtKB"/>
</dbReference>
<dbReference type="GO" id="GO:0045944">
    <property type="term" value="P:positive regulation of transcription by RNA polymerase II"/>
    <property type="evidence" value="ECO:0000318"/>
    <property type="project" value="GO_Central"/>
</dbReference>
<dbReference type="GO" id="GO:0040026">
    <property type="term" value="P:positive regulation of vulval development"/>
    <property type="evidence" value="ECO:0000315"/>
    <property type="project" value="WormBase"/>
</dbReference>
<dbReference type="GO" id="GO:0051302">
    <property type="term" value="P:regulation of cell division"/>
    <property type="evidence" value="ECO:0000315"/>
    <property type="project" value="WormBase"/>
</dbReference>
<dbReference type="GO" id="GO:0042659">
    <property type="term" value="P:regulation of cell fate specification"/>
    <property type="evidence" value="ECO:0000315"/>
    <property type="project" value="UniProtKB"/>
</dbReference>
<dbReference type="CDD" id="cd00086">
    <property type="entry name" value="homeodomain"/>
    <property type="match status" value="1"/>
</dbReference>
<dbReference type="FunFam" id="1.10.10.60:FF:000398">
    <property type="entry name" value="Homeobox protein lin-39"/>
    <property type="match status" value="1"/>
</dbReference>
<dbReference type="Gene3D" id="1.10.10.60">
    <property type="entry name" value="Homeodomain-like"/>
    <property type="match status" value="1"/>
</dbReference>
<dbReference type="InterPro" id="IPR050609">
    <property type="entry name" value="Antp_homeobox_Deformed_sf"/>
</dbReference>
<dbReference type="InterPro" id="IPR001356">
    <property type="entry name" value="HD"/>
</dbReference>
<dbReference type="InterPro" id="IPR020479">
    <property type="entry name" value="HD_metazoa"/>
</dbReference>
<dbReference type="InterPro" id="IPR017995">
    <property type="entry name" value="Homeobox_antennapedia"/>
</dbReference>
<dbReference type="InterPro" id="IPR001827">
    <property type="entry name" value="Homeobox_Antennapedia_CS"/>
</dbReference>
<dbReference type="InterPro" id="IPR017970">
    <property type="entry name" value="Homeobox_CS"/>
</dbReference>
<dbReference type="InterPro" id="IPR009057">
    <property type="entry name" value="Homeodomain-like_sf"/>
</dbReference>
<dbReference type="PANTHER" id="PTHR45771">
    <property type="entry name" value="HOMEOTIC PROTEIN DEFORMED"/>
    <property type="match status" value="1"/>
</dbReference>
<dbReference type="PANTHER" id="PTHR45771:SF6">
    <property type="entry name" value="HOMEOTIC PROTEIN SEX COMBS REDUCED"/>
    <property type="match status" value="1"/>
</dbReference>
<dbReference type="Pfam" id="PF00046">
    <property type="entry name" value="Homeodomain"/>
    <property type="match status" value="1"/>
</dbReference>
<dbReference type="PRINTS" id="PR00025">
    <property type="entry name" value="ANTENNAPEDIA"/>
</dbReference>
<dbReference type="PRINTS" id="PR00024">
    <property type="entry name" value="HOMEOBOX"/>
</dbReference>
<dbReference type="SMART" id="SM00389">
    <property type="entry name" value="HOX"/>
    <property type="match status" value="1"/>
</dbReference>
<dbReference type="SUPFAM" id="SSF46689">
    <property type="entry name" value="Homeodomain-like"/>
    <property type="match status" value="1"/>
</dbReference>
<dbReference type="PROSITE" id="PS00032">
    <property type="entry name" value="ANTENNAPEDIA"/>
    <property type="match status" value="1"/>
</dbReference>
<dbReference type="PROSITE" id="PS00027">
    <property type="entry name" value="HOMEOBOX_1"/>
    <property type="match status" value="1"/>
</dbReference>
<dbReference type="PROSITE" id="PS50071">
    <property type="entry name" value="HOMEOBOX_2"/>
    <property type="match status" value="1"/>
</dbReference>
<keyword id="KW-0217">Developmental protein</keyword>
<keyword id="KW-0238">DNA-binding</keyword>
<keyword id="KW-0371">Homeobox</keyword>
<keyword id="KW-0539">Nucleus</keyword>
<keyword id="KW-1185">Reference proteome</keyword>
<keyword id="KW-0804">Transcription</keyword>
<keyword id="KW-0805">Transcription regulation</keyword>
<reference key="1">
    <citation type="journal article" date="1993" name="Cell">
        <title>Control of cell fates in the central body region of C. elegans by the homeobox gene lin-39.</title>
        <authorList>
            <person name="Clark S.G."/>
            <person name="Chisholm A.D."/>
            <person name="Horvitz H.R."/>
        </authorList>
    </citation>
    <scope>NUCLEOTIDE SEQUENCE [MRNA]</scope>
    <scope>FUNCTION</scope>
    <source>
        <strain>Bristol N2</strain>
    </source>
</reference>
<reference key="2">
    <citation type="journal article" date="1993" name="Cell">
        <title>A homeotic gene cluster patterns the anteroposterior body axis of C. elegans.</title>
        <authorList>
            <person name="Wang B.B."/>
            <person name="Mueller-Immergluck M.M."/>
            <person name="Austin J."/>
            <person name="Robinson N.T."/>
            <person name="Chisholm A.D."/>
            <person name="Kenyon C."/>
        </authorList>
    </citation>
    <scope>NUCLEOTIDE SEQUENCE [MRNA]</scope>
</reference>
<reference key="3">
    <citation type="journal article" date="1998" name="Science">
        <title>Genome sequence of the nematode C. elegans: a platform for investigating biology.</title>
        <authorList>
            <consortium name="The C. elegans sequencing consortium"/>
        </authorList>
    </citation>
    <scope>NUCLEOTIDE SEQUENCE [LARGE SCALE GENOMIC DNA]</scope>
    <source>
        <strain>Bristol N2</strain>
    </source>
</reference>
<reference key="4">
    <citation type="journal article" date="2002" name="Development">
        <title>Cell fates and fusion in the C. elegans vulval primordium are regulated by the EGL-18 and ELT-6 GATA factors -- apparent direct targets of the LIN-39 Hox protein.</title>
        <authorList>
            <person name="Koh K."/>
            <person name="Peyrot S.M."/>
            <person name="Wood C.G."/>
            <person name="Wagmaister J.A."/>
            <person name="Maduro M.F."/>
            <person name="Eisenmann D.M."/>
            <person name="Rothman J.H."/>
        </authorList>
    </citation>
    <scope>FUNCTION</scope>
    <scope>DISRUPTION PHENOTYPE</scope>
</reference>
<reference key="5">
    <citation type="journal article" date="2004" name="Mol. Cell. Biol.">
        <title>The Caenorhabditis elegans nuclear receptor gene nhr-25 regulates epidermal cell development.</title>
        <authorList>
            <person name="Chen Z."/>
            <person name="Eastburn D.J."/>
            <person name="Han M."/>
        </authorList>
    </citation>
    <scope>FUNCTION</scope>
    <scope>INTERACTION WITH NHR-25</scope>
</reference>
<reference key="6">
    <citation type="journal article" date="2011" name="Development">
        <title>The C. elegans SoxC protein SEM-2 opposes differentiation factors to promote a proliferative blast cell fate in the postembryonic mesoderm.</title>
        <authorList>
            <person name="Tian C."/>
            <person name="Shi H."/>
            <person name="Colledge C."/>
            <person name="Stern M."/>
            <person name="Waterston R."/>
            <person name="Liu J."/>
        </authorList>
    </citation>
    <scope>FUNCTION</scope>
    <scope>DISRUPTION PHENOTYPE</scope>
</reference>
<reference key="7">
    <citation type="journal article" date="2013" name="Proc. Natl. Acad. Sci. U.S.A.">
        <title>Transmembrane protein MIG-13 links the Wnt signaling and Hox genes to the cell polarity in neuronal migration.</title>
        <authorList>
            <person name="Wang X."/>
            <person name="Zhou F."/>
            <person name="Lv S."/>
            <person name="Yi P."/>
            <person name="Zhu Z."/>
            <person name="Yang Y."/>
            <person name="Feng G."/>
            <person name="Li W."/>
            <person name="Ou G."/>
        </authorList>
    </citation>
    <scope>FUNCTION</scope>
    <scope>DEVELOPMENTAL STAGE</scope>
</reference>